<name>SNF7_EREGS</name>
<gene>
    <name type="primary">SNF7</name>
    <name type="synonym">VPS32</name>
    <name type="ordered locus">AFR209W</name>
</gene>
<dbReference type="EMBL" id="AE016819">
    <property type="protein sequence ID" value="AAS53580.1"/>
    <property type="molecule type" value="Genomic_DNA"/>
</dbReference>
<dbReference type="RefSeq" id="NP_985756.1">
    <property type="nucleotide sequence ID" value="NM_211110.1"/>
</dbReference>
<dbReference type="SMR" id="Q753W3"/>
<dbReference type="FunCoup" id="Q753W3">
    <property type="interactions" value="738"/>
</dbReference>
<dbReference type="STRING" id="284811.Q753W3"/>
<dbReference type="EnsemblFungi" id="AAS53580">
    <property type="protein sequence ID" value="AAS53580"/>
    <property type="gene ID" value="AGOS_AFR209W"/>
</dbReference>
<dbReference type="GeneID" id="4622017"/>
<dbReference type="KEGG" id="ago:AGOS_AFR209W"/>
<dbReference type="eggNOG" id="KOG1656">
    <property type="taxonomic scope" value="Eukaryota"/>
</dbReference>
<dbReference type="HOGENOM" id="CLU_071097_1_0_1"/>
<dbReference type="InParanoid" id="Q753W3"/>
<dbReference type="OMA" id="MKQIHGG"/>
<dbReference type="OrthoDB" id="5592979at2759"/>
<dbReference type="Proteomes" id="UP000000591">
    <property type="component" value="Chromosome VI"/>
</dbReference>
<dbReference type="GO" id="GO:0009898">
    <property type="term" value="C:cytoplasmic side of plasma membrane"/>
    <property type="evidence" value="ECO:0000318"/>
    <property type="project" value="GO_Central"/>
</dbReference>
<dbReference type="GO" id="GO:0005829">
    <property type="term" value="C:cytosol"/>
    <property type="evidence" value="ECO:0007669"/>
    <property type="project" value="EnsemblFungi"/>
</dbReference>
<dbReference type="GO" id="GO:0000815">
    <property type="term" value="C:ESCRT III complex"/>
    <property type="evidence" value="ECO:0000318"/>
    <property type="project" value="GO_Central"/>
</dbReference>
<dbReference type="GO" id="GO:0005771">
    <property type="term" value="C:multivesicular body"/>
    <property type="evidence" value="ECO:0000318"/>
    <property type="project" value="GO_Central"/>
</dbReference>
<dbReference type="GO" id="GO:0042802">
    <property type="term" value="F:identical protein binding"/>
    <property type="evidence" value="ECO:0007669"/>
    <property type="project" value="EnsemblFungi"/>
</dbReference>
<dbReference type="GO" id="GO:1904669">
    <property type="term" value="P:ATP export"/>
    <property type="evidence" value="ECO:0007669"/>
    <property type="project" value="EnsemblFungi"/>
</dbReference>
<dbReference type="GO" id="GO:0070676">
    <property type="term" value="P:intralumenal vesicle formation"/>
    <property type="evidence" value="ECO:0007669"/>
    <property type="project" value="EnsemblFungi"/>
</dbReference>
<dbReference type="GO" id="GO:0032511">
    <property type="term" value="P:late endosome to vacuole transport via multivesicular body sorting pathway"/>
    <property type="evidence" value="ECO:0000318"/>
    <property type="project" value="GO_Central"/>
</dbReference>
<dbReference type="GO" id="GO:0007031">
    <property type="term" value="P:peroxisome organization"/>
    <property type="evidence" value="ECO:0007669"/>
    <property type="project" value="EnsemblFungi"/>
</dbReference>
<dbReference type="GO" id="GO:0043328">
    <property type="term" value="P:protein transport to vacuole involved in ubiquitin-dependent protein catabolic process via the multivesicular body sorting pathway"/>
    <property type="evidence" value="ECO:0007669"/>
    <property type="project" value="EnsemblFungi"/>
</dbReference>
<dbReference type="GO" id="GO:0061709">
    <property type="term" value="P:reticulophagy"/>
    <property type="evidence" value="ECO:0007669"/>
    <property type="project" value="EnsemblFungi"/>
</dbReference>
<dbReference type="GO" id="GO:0006900">
    <property type="term" value="P:vesicle budding from membrane"/>
    <property type="evidence" value="ECO:0000318"/>
    <property type="project" value="GO_Central"/>
</dbReference>
<dbReference type="Gene3D" id="6.10.250.1710">
    <property type="match status" value="1"/>
</dbReference>
<dbReference type="Gene3D" id="1.10.287.1060">
    <property type="entry name" value="ESAT-6-like"/>
    <property type="match status" value="1"/>
</dbReference>
<dbReference type="InterPro" id="IPR005024">
    <property type="entry name" value="Snf7_fam"/>
</dbReference>
<dbReference type="PANTHER" id="PTHR22761">
    <property type="entry name" value="CHARGED MULTIVESICULAR BODY PROTEIN"/>
    <property type="match status" value="1"/>
</dbReference>
<dbReference type="PANTHER" id="PTHR22761:SF10">
    <property type="entry name" value="GH13992P"/>
    <property type="match status" value="1"/>
</dbReference>
<dbReference type="Pfam" id="PF03357">
    <property type="entry name" value="Snf7"/>
    <property type="match status" value="1"/>
</dbReference>
<evidence type="ECO:0000250" key="1"/>
<evidence type="ECO:0000255" key="2"/>
<evidence type="ECO:0000256" key="3">
    <source>
        <dbReference type="SAM" id="MobiDB-lite"/>
    </source>
</evidence>
<evidence type="ECO:0000305" key="4"/>
<sequence length="237" mass="26685">MWSYLFGSGNAKQKKELPKKAILELREHIQLLSKKQAHLQTQMTSQEESARHFLSKGNKNMAKAALKRKKVFESQLLKIDKQVDSLEQQLYSIENANLNLETMKAMKQGASAMKHIHEGLDVERVDETMDEIREQVELGEEISEAISRPLYTGVNEIDEDELDEELDMLAQEEVARKVMEPGAAVPAAAPATKVSLPSVPSSDMPQQDRGQPVTLGMDQEEDEDERALRELQAEMGL</sequence>
<feature type="chain" id="PRO_0000211436" description="Vacuolar-sorting protein SNF7">
    <location>
        <begin position="1"/>
        <end position="237"/>
    </location>
</feature>
<feature type="region of interest" description="Disordered" evidence="3">
    <location>
        <begin position="187"/>
        <end position="237"/>
    </location>
</feature>
<feature type="coiled-coil region" evidence="2">
    <location>
        <begin position="67"/>
        <end position="141"/>
    </location>
</feature>
<feature type="compositionally biased region" description="Polar residues" evidence="3">
    <location>
        <begin position="198"/>
        <end position="209"/>
    </location>
</feature>
<feature type="compositionally biased region" description="Basic and acidic residues" evidence="3">
    <location>
        <begin position="226"/>
        <end position="237"/>
    </location>
</feature>
<proteinExistence type="inferred from homology"/>
<reference key="1">
    <citation type="journal article" date="2004" name="Science">
        <title>The Ashbya gossypii genome as a tool for mapping the ancient Saccharomyces cerevisiae genome.</title>
        <authorList>
            <person name="Dietrich F.S."/>
            <person name="Voegeli S."/>
            <person name="Brachat S."/>
            <person name="Lerch A."/>
            <person name="Gates K."/>
            <person name="Steiner S."/>
            <person name="Mohr C."/>
            <person name="Poehlmann R."/>
            <person name="Luedi P."/>
            <person name="Choi S."/>
            <person name="Wing R.A."/>
            <person name="Flavier A."/>
            <person name="Gaffney T.D."/>
            <person name="Philippsen P."/>
        </authorList>
    </citation>
    <scope>NUCLEOTIDE SEQUENCE [LARGE SCALE GENOMIC DNA]</scope>
    <source>
        <strain>ATCC 10895 / CBS 109.51 / FGSC 9923 / NRRL Y-1056</strain>
    </source>
</reference>
<reference key="2">
    <citation type="journal article" date="2013" name="G3 (Bethesda)">
        <title>Genomes of Ashbya fungi isolated from insects reveal four mating-type loci, numerous translocations, lack of transposons, and distinct gene duplications.</title>
        <authorList>
            <person name="Dietrich F.S."/>
            <person name="Voegeli S."/>
            <person name="Kuo S."/>
            <person name="Philippsen P."/>
        </authorList>
    </citation>
    <scope>GENOME REANNOTATION</scope>
    <source>
        <strain>ATCC 10895 / CBS 109.51 / FGSC 9923 / NRRL Y-1056</strain>
    </source>
</reference>
<protein>
    <recommendedName>
        <fullName>Vacuolar-sorting protein SNF7</fullName>
    </recommendedName>
    <alternativeName>
        <fullName>Vacuolar protein-sorting-associated protein 32</fullName>
    </alternativeName>
</protein>
<comment type="function">
    <text evidence="1">Required for the sorting and concentration of proteins resulting in the entry of these proteins into the invaginating vesicles of the multivesicular body (MVB). Also required for the proteolytic cleavage of the transcription factor RIM101 in response to alkaline ambient pH (By similarity).</text>
</comment>
<comment type="subunit">
    <text evidence="1">A component of the endosomal sorting required for transport complex III (ESCRT-III).</text>
</comment>
<comment type="subcellular location">
    <subcellularLocation>
        <location evidence="1">Cytoplasm</location>
    </subcellularLocation>
    <subcellularLocation>
        <location evidence="1">Endosome membrane</location>
        <topology evidence="1">Peripheral membrane protein</topology>
    </subcellularLocation>
</comment>
<comment type="similarity">
    <text evidence="4">Belongs to the SNF7 family.</text>
</comment>
<accession>Q753W3</accession>
<keyword id="KW-0175">Coiled coil</keyword>
<keyword id="KW-0963">Cytoplasm</keyword>
<keyword id="KW-0967">Endosome</keyword>
<keyword id="KW-0472">Membrane</keyword>
<keyword id="KW-1185">Reference proteome</keyword>
<organism>
    <name type="scientific">Eremothecium gossypii (strain ATCC 10895 / CBS 109.51 / FGSC 9923 / NRRL Y-1056)</name>
    <name type="common">Yeast</name>
    <name type="synonym">Ashbya gossypii</name>
    <dbReference type="NCBI Taxonomy" id="284811"/>
    <lineage>
        <taxon>Eukaryota</taxon>
        <taxon>Fungi</taxon>
        <taxon>Dikarya</taxon>
        <taxon>Ascomycota</taxon>
        <taxon>Saccharomycotina</taxon>
        <taxon>Saccharomycetes</taxon>
        <taxon>Saccharomycetales</taxon>
        <taxon>Saccharomycetaceae</taxon>
        <taxon>Eremothecium</taxon>
    </lineage>
</organism>